<dbReference type="EC" id="2.4.2.9" evidence="1"/>
<dbReference type="EMBL" id="AE008691">
    <property type="protein sequence ID" value="AAM23451.1"/>
    <property type="molecule type" value="Genomic_DNA"/>
</dbReference>
<dbReference type="RefSeq" id="WP_011024653.1">
    <property type="nucleotide sequence ID" value="NZ_JANUCV010000001.1"/>
</dbReference>
<dbReference type="SMR" id="Q8RD94"/>
<dbReference type="STRING" id="273068.TTE0147"/>
<dbReference type="KEGG" id="tte:TTE0147"/>
<dbReference type="eggNOG" id="COG0035">
    <property type="taxonomic scope" value="Bacteria"/>
</dbReference>
<dbReference type="HOGENOM" id="CLU_067096_2_2_9"/>
<dbReference type="OrthoDB" id="9781675at2"/>
<dbReference type="UniPathway" id="UPA00574">
    <property type="reaction ID" value="UER00636"/>
</dbReference>
<dbReference type="Proteomes" id="UP000000555">
    <property type="component" value="Chromosome"/>
</dbReference>
<dbReference type="GO" id="GO:0005525">
    <property type="term" value="F:GTP binding"/>
    <property type="evidence" value="ECO:0007669"/>
    <property type="project" value="UniProtKB-KW"/>
</dbReference>
<dbReference type="GO" id="GO:0000287">
    <property type="term" value="F:magnesium ion binding"/>
    <property type="evidence" value="ECO:0007669"/>
    <property type="project" value="UniProtKB-UniRule"/>
</dbReference>
<dbReference type="GO" id="GO:0004845">
    <property type="term" value="F:uracil phosphoribosyltransferase activity"/>
    <property type="evidence" value="ECO:0007669"/>
    <property type="project" value="UniProtKB-UniRule"/>
</dbReference>
<dbReference type="GO" id="GO:0044206">
    <property type="term" value="P:UMP salvage"/>
    <property type="evidence" value="ECO:0007669"/>
    <property type="project" value="UniProtKB-UniRule"/>
</dbReference>
<dbReference type="GO" id="GO:0006223">
    <property type="term" value="P:uracil salvage"/>
    <property type="evidence" value="ECO:0007669"/>
    <property type="project" value="InterPro"/>
</dbReference>
<dbReference type="CDD" id="cd06223">
    <property type="entry name" value="PRTases_typeI"/>
    <property type="match status" value="1"/>
</dbReference>
<dbReference type="FunFam" id="3.40.50.2020:FF:000003">
    <property type="entry name" value="Uracil phosphoribosyltransferase"/>
    <property type="match status" value="1"/>
</dbReference>
<dbReference type="Gene3D" id="3.40.50.2020">
    <property type="match status" value="1"/>
</dbReference>
<dbReference type="HAMAP" id="MF_01218_B">
    <property type="entry name" value="Upp_B"/>
    <property type="match status" value="1"/>
</dbReference>
<dbReference type="InterPro" id="IPR000836">
    <property type="entry name" value="PRibTrfase_dom"/>
</dbReference>
<dbReference type="InterPro" id="IPR029057">
    <property type="entry name" value="PRTase-like"/>
</dbReference>
<dbReference type="InterPro" id="IPR034332">
    <property type="entry name" value="Upp_B"/>
</dbReference>
<dbReference type="InterPro" id="IPR050054">
    <property type="entry name" value="UPRTase/APRTase"/>
</dbReference>
<dbReference type="InterPro" id="IPR005765">
    <property type="entry name" value="Ura_phspho_trans"/>
</dbReference>
<dbReference type="NCBIfam" id="NF001097">
    <property type="entry name" value="PRK00129.1"/>
    <property type="match status" value="1"/>
</dbReference>
<dbReference type="NCBIfam" id="TIGR01091">
    <property type="entry name" value="upp"/>
    <property type="match status" value="1"/>
</dbReference>
<dbReference type="PANTHER" id="PTHR32315">
    <property type="entry name" value="ADENINE PHOSPHORIBOSYLTRANSFERASE"/>
    <property type="match status" value="1"/>
</dbReference>
<dbReference type="PANTHER" id="PTHR32315:SF4">
    <property type="entry name" value="URACIL PHOSPHORIBOSYLTRANSFERASE, CHLOROPLASTIC"/>
    <property type="match status" value="1"/>
</dbReference>
<dbReference type="Pfam" id="PF14681">
    <property type="entry name" value="UPRTase"/>
    <property type="match status" value="1"/>
</dbReference>
<dbReference type="SUPFAM" id="SSF53271">
    <property type="entry name" value="PRTase-like"/>
    <property type="match status" value="1"/>
</dbReference>
<organism>
    <name type="scientific">Caldanaerobacter subterraneus subsp. tengcongensis (strain DSM 15242 / JCM 11007 / NBRC 100824 / MB4)</name>
    <name type="common">Thermoanaerobacter tengcongensis</name>
    <dbReference type="NCBI Taxonomy" id="273068"/>
    <lineage>
        <taxon>Bacteria</taxon>
        <taxon>Bacillati</taxon>
        <taxon>Bacillota</taxon>
        <taxon>Clostridia</taxon>
        <taxon>Thermoanaerobacterales</taxon>
        <taxon>Thermoanaerobacteraceae</taxon>
        <taxon>Caldanaerobacter</taxon>
    </lineage>
</organism>
<sequence length="210" mass="22910">MYENVFVIDHPLIQHKISLIRDENTGSKEFRELVGEIAMLMAYEVTRDLPLEEIEVKTPIAVAKTKVIAGKKLGIIPILRAGLVMADGMLKLIPTAKVGHIGIYRDPETLKPVEYYCKLPSDIAERDLIVVDPMLATGGSASAAIHFLKERGAQSIKLVNLIAAPEGIKAVHKDHPEVPIYVASIDQGLNEHGYIVPGLGDAGDRLFGTK</sequence>
<proteinExistence type="inferred from homology"/>
<feature type="chain" id="PRO_0000120906" description="Uracil phosphoribosyltransferase">
    <location>
        <begin position="1"/>
        <end position="210"/>
    </location>
</feature>
<feature type="binding site" evidence="1">
    <location>
        <position position="80"/>
    </location>
    <ligand>
        <name>5-phospho-alpha-D-ribose 1-diphosphate</name>
        <dbReference type="ChEBI" id="CHEBI:58017"/>
    </ligand>
</feature>
<feature type="binding site" evidence="1">
    <location>
        <position position="105"/>
    </location>
    <ligand>
        <name>5-phospho-alpha-D-ribose 1-diphosphate</name>
        <dbReference type="ChEBI" id="CHEBI:58017"/>
    </ligand>
</feature>
<feature type="binding site" evidence="1">
    <location>
        <begin position="132"/>
        <end position="140"/>
    </location>
    <ligand>
        <name>5-phospho-alpha-D-ribose 1-diphosphate</name>
        <dbReference type="ChEBI" id="CHEBI:58017"/>
    </ligand>
</feature>
<feature type="binding site" evidence="1">
    <location>
        <position position="195"/>
    </location>
    <ligand>
        <name>uracil</name>
        <dbReference type="ChEBI" id="CHEBI:17568"/>
    </ligand>
</feature>
<feature type="binding site" evidence="1">
    <location>
        <begin position="200"/>
        <end position="202"/>
    </location>
    <ligand>
        <name>uracil</name>
        <dbReference type="ChEBI" id="CHEBI:17568"/>
    </ligand>
</feature>
<feature type="binding site" evidence="1">
    <location>
        <position position="201"/>
    </location>
    <ligand>
        <name>5-phospho-alpha-D-ribose 1-diphosphate</name>
        <dbReference type="ChEBI" id="CHEBI:58017"/>
    </ligand>
</feature>
<comment type="function">
    <text evidence="1">Catalyzes the conversion of uracil and 5-phospho-alpha-D-ribose 1-diphosphate (PRPP) to UMP and diphosphate.</text>
</comment>
<comment type="catalytic activity">
    <reaction evidence="1">
        <text>UMP + diphosphate = 5-phospho-alpha-D-ribose 1-diphosphate + uracil</text>
        <dbReference type="Rhea" id="RHEA:13017"/>
        <dbReference type="ChEBI" id="CHEBI:17568"/>
        <dbReference type="ChEBI" id="CHEBI:33019"/>
        <dbReference type="ChEBI" id="CHEBI:57865"/>
        <dbReference type="ChEBI" id="CHEBI:58017"/>
        <dbReference type="EC" id="2.4.2.9"/>
    </reaction>
</comment>
<comment type="cofactor">
    <cofactor evidence="1">
        <name>Mg(2+)</name>
        <dbReference type="ChEBI" id="CHEBI:18420"/>
    </cofactor>
    <text evidence="1">Binds 1 Mg(2+) ion per subunit. The magnesium is bound as Mg-PRPP.</text>
</comment>
<comment type="activity regulation">
    <text evidence="1">Allosterically activated by GTP.</text>
</comment>
<comment type="pathway">
    <text evidence="1">Pyrimidine metabolism; UMP biosynthesis via salvage pathway; UMP from uracil: step 1/1.</text>
</comment>
<comment type="similarity">
    <text evidence="1">Belongs to the UPRTase family.</text>
</comment>
<evidence type="ECO:0000255" key="1">
    <source>
        <dbReference type="HAMAP-Rule" id="MF_01218"/>
    </source>
</evidence>
<name>UPP_CALS4</name>
<gene>
    <name evidence="1" type="primary">upp</name>
    <name type="ordered locus">TTE0147</name>
</gene>
<accession>Q8RD94</accession>
<reference key="1">
    <citation type="journal article" date="2002" name="Genome Res.">
        <title>A complete sequence of the T. tengcongensis genome.</title>
        <authorList>
            <person name="Bao Q."/>
            <person name="Tian Y."/>
            <person name="Li W."/>
            <person name="Xu Z."/>
            <person name="Xuan Z."/>
            <person name="Hu S."/>
            <person name="Dong W."/>
            <person name="Yang J."/>
            <person name="Chen Y."/>
            <person name="Xue Y."/>
            <person name="Xu Y."/>
            <person name="Lai X."/>
            <person name="Huang L."/>
            <person name="Dong X."/>
            <person name="Ma Y."/>
            <person name="Ling L."/>
            <person name="Tan H."/>
            <person name="Chen R."/>
            <person name="Wang J."/>
            <person name="Yu J."/>
            <person name="Yang H."/>
        </authorList>
    </citation>
    <scope>NUCLEOTIDE SEQUENCE [LARGE SCALE GENOMIC DNA]</scope>
    <source>
        <strain>DSM 15242 / JCM 11007 / NBRC 100824 / MB4</strain>
    </source>
</reference>
<keyword id="KW-0021">Allosteric enzyme</keyword>
<keyword id="KW-0328">Glycosyltransferase</keyword>
<keyword id="KW-0342">GTP-binding</keyword>
<keyword id="KW-0460">Magnesium</keyword>
<keyword id="KW-0547">Nucleotide-binding</keyword>
<keyword id="KW-1185">Reference proteome</keyword>
<keyword id="KW-0808">Transferase</keyword>
<protein>
    <recommendedName>
        <fullName evidence="1">Uracil phosphoribosyltransferase</fullName>
        <ecNumber evidence="1">2.4.2.9</ecNumber>
    </recommendedName>
    <alternativeName>
        <fullName evidence="1">UMP pyrophosphorylase</fullName>
    </alternativeName>
    <alternativeName>
        <fullName evidence="1">UPRTase</fullName>
    </alternativeName>
</protein>